<reference key="1">
    <citation type="submission" date="2008-03" db="EMBL/GenBank/DDBJ databases">
        <title>Complete sequence of Leptothrix cholodnii SP-6.</title>
        <authorList>
            <consortium name="US DOE Joint Genome Institute"/>
            <person name="Copeland A."/>
            <person name="Lucas S."/>
            <person name="Lapidus A."/>
            <person name="Glavina del Rio T."/>
            <person name="Dalin E."/>
            <person name="Tice H."/>
            <person name="Bruce D."/>
            <person name="Goodwin L."/>
            <person name="Pitluck S."/>
            <person name="Chertkov O."/>
            <person name="Brettin T."/>
            <person name="Detter J.C."/>
            <person name="Han C."/>
            <person name="Kuske C.R."/>
            <person name="Schmutz J."/>
            <person name="Larimer F."/>
            <person name="Land M."/>
            <person name="Hauser L."/>
            <person name="Kyrpides N."/>
            <person name="Lykidis A."/>
            <person name="Emerson D."/>
            <person name="Richardson P."/>
        </authorList>
    </citation>
    <scope>NUCLEOTIDE SEQUENCE [LARGE SCALE GENOMIC DNA]</scope>
    <source>
        <strain>ATCC 51168 / LMG 8142 / SP-6</strain>
    </source>
</reference>
<evidence type="ECO:0000255" key="1">
    <source>
        <dbReference type="HAMAP-Rule" id="MF_01343"/>
    </source>
</evidence>
<evidence type="ECO:0000256" key="2">
    <source>
        <dbReference type="SAM" id="MobiDB-lite"/>
    </source>
</evidence>
<evidence type="ECO:0000305" key="3"/>
<keyword id="KW-1185">Reference proteome</keyword>
<keyword id="KW-0687">Ribonucleoprotein</keyword>
<keyword id="KW-0689">Ribosomal protein</keyword>
<keyword id="KW-0694">RNA-binding</keyword>
<keyword id="KW-0699">rRNA-binding</keyword>
<accession>B1Y822</accession>
<feature type="chain" id="PRO_0000354203" description="Small ribosomal subunit protein uS15">
    <location>
        <begin position="1"/>
        <end position="87"/>
    </location>
</feature>
<feature type="region of interest" description="Disordered" evidence="2">
    <location>
        <begin position="1"/>
        <end position="22"/>
    </location>
</feature>
<name>RS15_LEPCP</name>
<proteinExistence type="inferred from homology"/>
<comment type="function">
    <text evidence="1">One of the primary rRNA binding proteins, it binds directly to 16S rRNA where it helps nucleate assembly of the platform of the 30S subunit by binding and bridging several RNA helices of the 16S rRNA.</text>
</comment>
<comment type="function">
    <text evidence="1">Forms an intersubunit bridge (bridge B4) with the 23S rRNA of the 50S subunit in the ribosome.</text>
</comment>
<comment type="subunit">
    <text evidence="1">Part of the 30S ribosomal subunit. Forms a bridge to the 50S subunit in the 70S ribosome, contacting the 23S rRNA.</text>
</comment>
<comment type="similarity">
    <text evidence="1">Belongs to the universal ribosomal protein uS15 family.</text>
</comment>
<protein>
    <recommendedName>
        <fullName evidence="1">Small ribosomal subunit protein uS15</fullName>
    </recommendedName>
    <alternativeName>
        <fullName evidence="3">30S ribosomal protein S15</fullName>
    </alternativeName>
</protein>
<sequence>MSEINKAEIVASNARAPSDTGSPEVQVALLTARINHLMPHFKTHMKDHHGRRGLLRMVSRRRKLLDYLKSRDADRYTSLIQKLGLRK</sequence>
<organism>
    <name type="scientific">Leptothrix cholodnii (strain ATCC 51168 / LMG 8142 / SP-6)</name>
    <name type="common">Leptothrix discophora (strain SP-6)</name>
    <dbReference type="NCBI Taxonomy" id="395495"/>
    <lineage>
        <taxon>Bacteria</taxon>
        <taxon>Pseudomonadati</taxon>
        <taxon>Pseudomonadota</taxon>
        <taxon>Betaproteobacteria</taxon>
        <taxon>Burkholderiales</taxon>
        <taxon>Sphaerotilaceae</taxon>
        <taxon>Leptothrix</taxon>
    </lineage>
</organism>
<dbReference type="EMBL" id="CP001013">
    <property type="protein sequence ID" value="ACB33764.1"/>
    <property type="molecule type" value="Genomic_DNA"/>
</dbReference>
<dbReference type="SMR" id="B1Y822"/>
<dbReference type="STRING" id="395495.Lcho_1496"/>
<dbReference type="KEGG" id="lch:Lcho_1496"/>
<dbReference type="eggNOG" id="COG0184">
    <property type="taxonomic scope" value="Bacteria"/>
</dbReference>
<dbReference type="HOGENOM" id="CLU_148518_0_0_4"/>
<dbReference type="Proteomes" id="UP000001693">
    <property type="component" value="Chromosome"/>
</dbReference>
<dbReference type="GO" id="GO:0022627">
    <property type="term" value="C:cytosolic small ribosomal subunit"/>
    <property type="evidence" value="ECO:0007669"/>
    <property type="project" value="TreeGrafter"/>
</dbReference>
<dbReference type="GO" id="GO:0019843">
    <property type="term" value="F:rRNA binding"/>
    <property type="evidence" value="ECO:0007669"/>
    <property type="project" value="UniProtKB-UniRule"/>
</dbReference>
<dbReference type="GO" id="GO:0003735">
    <property type="term" value="F:structural constituent of ribosome"/>
    <property type="evidence" value="ECO:0007669"/>
    <property type="project" value="InterPro"/>
</dbReference>
<dbReference type="GO" id="GO:0006412">
    <property type="term" value="P:translation"/>
    <property type="evidence" value="ECO:0007669"/>
    <property type="project" value="UniProtKB-UniRule"/>
</dbReference>
<dbReference type="CDD" id="cd00353">
    <property type="entry name" value="Ribosomal_S15p_S13e"/>
    <property type="match status" value="1"/>
</dbReference>
<dbReference type="FunFam" id="1.10.287.10:FF:000002">
    <property type="entry name" value="30S ribosomal protein S15"/>
    <property type="match status" value="1"/>
</dbReference>
<dbReference type="Gene3D" id="6.10.250.3130">
    <property type="match status" value="1"/>
</dbReference>
<dbReference type="Gene3D" id="1.10.287.10">
    <property type="entry name" value="S15/NS1, RNA-binding"/>
    <property type="match status" value="1"/>
</dbReference>
<dbReference type="HAMAP" id="MF_01343_B">
    <property type="entry name" value="Ribosomal_uS15_B"/>
    <property type="match status" value="1"/>
</dbReference>
<dbReference type="InterPro" id="IPR000589">
    <property type="entry name" value="Ribosomal_uS15"/>
</dbReference>
<dbReference type="InterPro" id="IPR005290">
    <property type="entry name" value="Ribosomal_uS15_bac-type"/>
</dbReference>
<dbReference type="InterPro" id="IPR009068">
    <property type="entry name" value="uS15_NS1_RNA-bd_sf"/>
</dbReference>
<dbReference type="NCBIfam" id="TIGR00952">
    <property type="entry name" value="S15_bact"/>
    <property type="match status" value="1"/>
</dbReference>
<dbReference type="PANTHER" id="PTHR23321">
    <property type="entry name" value="RIBOSOMAL PROTEIN S15, BACTERIAL AND ORGANELLAR"/>
    <property type="match status" value="1"/>
</dbReference>
<dbReference type="PANTHER" id="PTHR23321:SF26">
    <property type="entry name" value="SMALL RIBOSOMAL SUBUNIT PROTEIN US15M"/>
    <property type="match status" value="1"/>
</dbReference>
<dbReference type="Pfam" id="PF00312">
    <property type="entry name" value="Ribosomal_S15"/>
    <property type="match status" value="1"/>
</dbReference>
<dbReference type="SMART" id="SM01387">
    <property type="entry name" value="Ribosomal_S15"/>
    <property type="match status" value="1"/>
</dbReference>
<dbReference type="SUPFAM" id="SSF47060">
    <property type="entry name" value="S15/NS1 RNA-binding domain"/>
    <property type="match status" value="1"/>
</dbReference>
<dbReference type="PROSITE" id="PS00362">
    <property type="entry name" value="RIBOSOMAL_S15"/>
    <property type="match status" value="1"/>
</dbReference>
<gene>
    <name evidence="1" type="primary">rpsO</name>
    <name type="ordered locus">Lcho_1496</name>
</gene>